<accession>P0CX43</accession>
<accession>D6VU14</accession>
<accession>P53030</accession>
<evidence type="ECO:0000269" key="1">
    <source>
    </source>
</evidence>
<evidence type="ECO:0000269" key="2">
    <source>
    </source>
</evidence>
<evidence type="ECO:0000269" key="3">
    <source>
    </source>
</evidence>
<evidence type="ECO:0000269" key="4">
    <source>
    </source>
</evidence>
<evidence type="ECO:0000269" key="5">
    <source>
    </source>
</evidence>
<evidence type="ECO:0000269" key="6">
    <source>
    </source>
</evidence>
<evidence type="ECO:0000303" key="7">
    <source>
    </source>
</evidence>
<evidence type="ECO:0000303" key="8">
    <source>
    </source>
</evidence>
<evidence type="ECO:0000305" key="9"/>
<evidence type="ECO:0000305" key="10">
    <source>
    </source>
</evidence>
<evidence type="ECO:0000305" key="11">
    <source>
    </source>
</evidence>
<evidence type="ECO:0007744" key="12">
    <source>
    </source>
</evidence>
<evidence type="ECO:0007744" key="13">
    <source>
    </source>
</evidence>
<evidence type="ECO:0007744" key="14">
    <source>
    </source>
</evidence>
<gene>
    <name evidence="8" type="primary">RPL1A</name>
    <name type="synonym">SSM1</name>
    <name type="synonym">SSM1A</name>
    <name type="ordered locus">YPL220W</name>
</gene>
<dbReference type="EMBL" id="X70985">
    <property type="protein sequence ID" value="CAA50314.1"/>
    <property type="molecule type" value="Genomic_DNA"/>
</dbReference>
<dbReference type="EMBL" id="Z73576">
    <property type="protein sequence ID" value="CAA97935.1"/>
    <property type="molecule type" value="Genomic_DNA"/>
</dbReference>
<dbReference type="EMBL" id="BK006949">
    <property type="protein sequence ID" value="DAA11216.1"/>
    <property type="molecule type" value="Genomic_DNA"/>
</dbReference>
<dbReference type="PIR" id="S53893">
    <property type="entry name" value="S53893"/>
</dbReference>
<dbReference type="RefSeq" id="NP_015104.1">
    <property type="nucleotide sequence ID" value="NM_001184034.1"/>
</dbReference>
<dbReference type="PDB" id="2NOQ">
    <property type="method" value="EM"/>
    <property type="resolution" value="7.30 A"/>
    <property type="chains" value="G=4-216"/>
</dbReference>
<dbReference type="PDB" id="3J0P">
    <property type="method" value="EM"/>
    <property type="resolution" value="10.60 A"/>
    <property type="chains" value="B=4-216"/>
</dbReference>
<dbReference type="PDB" id="3J0Q">
    <property type="method" value="EM"/>
    <property type="resolution" value="10.60 A"/>
    <property type="chains" value="B=4-216"/>
</dbReference>
<dbReference type="PDB" id="3J6X">
    <property type="method" value="EM"/>
    <property type="resolution" value="6.10 A"/>
    <property type="chains" value="L1=1-217"/>
</dbReference>
<dbReference type="PDB" id="3J6Y">
    <property type="method" value="EM"/>
    <property type="resolution" value="6.10 A"/>
    <property type="chains" value="L1=1-217"/>
</dbReference>
<dbReference type="PDB" id="3J77">
    <property type="method" value="EM"/>
    <property type="resolution" value="6.20 A"/>
    <property type="chains" value="L1=1-217"/>
</dbReference>
<dbReference type="PDB" id="3J78">
    <property type="method" value="EM"/>
    <property type="resolution" value="6.30 A"/>
    <property type="chains" value="L1=1-217"/>
</dbReference>
<dbReference type="PDB" id="4V4B">
    <property type="method" value="EM"/>
    <property type="resolution" value="11.70 A"/>
    <property type="chains" value="BA=1-217"/>
</dbReference>
<dbReference type="PDB" id="4V5Z">
    <property type="method" value="EM"/>
    <property type="resolution" value="8.70 A"/>
    <property type="chains" value="B5=21-216"/>
</dbReference>
<dbReference type="PDB" id="4V6I">
    <property type="method" value="EM"/>
    <property type="resolution" value="8.80 A"/>
    <property type="chains" value="BA=1-217"/>
</dbReference>
<dbReference type="PDB" id="4V7F">
    <property type="method" value="EM"/>
    <property type="resolution" value="8.70 A"/>
    <property type="chains" value="A=1-217"/>
</dbReference>
<dbReference type="PDB" id="4V7H">
    <property type="method" value="EM"/>
    <property type="resolution" value="8.90 A"/>
    <property type="chains" value="A=4-216"/>
</dbReference>
<dbReference type="PDB" id="4V7R">
    <property type="method" value="X-ray"/>
    <property type="resolution" value="4.00 A"/>
    <property type="chains" value="BA/DA=1-217"/>
</dbReference>
<dbReference type="PDB" id="4V91">
    <property type="method" value="EM"/>
    <property type="resolution" value="3.70 A"/>
    <property type="chains" value="t=1-217"/>
</dbReference>
<dbReference type="PDB" id="5JCS">
    <property type="method" value="EM"/>
    <property type="resolution" value="9.50 A"/>
    <property type="chains" value="I=1-217"/>
</dbReference>
<dbReference type="PDB" id="5JUO">
    <property type="method" value="EM"/>
    <property type="resolution" value="4.00 A"/>
    <property type="chains" value="E=1-217"/>
</dbReference>
<dbReference type="PDB" id="5JUP">
    <property type="method" value="EM"/>
    <property type="resolution" value="3.50 A"/>
    <property type="chains" value="E=1-217"/>
</dbReference>
<dbReference type="PDB" id="5JUS">
    <property type="method" value="EM"/>
    <property type="resolution" value="4.20 A"/>
    <property type="chains" value="E=1-217"/>
</dbReference>
<dbReference type="PDB" id="5JUT">
    <property type="method" value="EM"/>
    <property type="resolution" value="4.00 A"/>
    <property type="chains" value="E=1-217"/>
</dbReference>
<dbReference type="PDB" id="5JUU">
    <property type="method" value="EM"/>
    <property type="resolution" value="4.00 A"/>
    <property type="chains" value="E=1-217"/>
</dbReference>
<dbReference type="PDB" id="6GQB">
    <property type="method" value="EM"/>
    <property type="resolution" value="3.90 A"/>
    <property type="chains" value="BA=13-216"/>
</dbReference>
<dbReference type="PDB" id="6GQV">
    <property type="method" value="EM"/>
    <property type="resolution" value="4.00 A"/>
    <property type="chains" value="BA=13-216"/>
</dbReference>
<dbReference type="PDB" id="6OIG">
    <property type="method" value="EM"/>
    <property type="resolution" value="3.80 A"/>
    <property type="chains" value="z=13-216"/>
</dbReference>
<dbReference type="PDB" id="6R84">
    <property type="method" value="EM"/>
    <property type="resolution" value="3.60 A"/>
    <property type="chains" value="L=13-216"/>
</dbReference>
<dbReference type="PDB" id="6R86">
    <property type="method" value="EM"/>
    <property type="resolution" value="3.40 A"/>
    <property type="chains" value="L=13-216"/>
</dbReference>
<dbReference type="PDB" id="6R87">
    <property type="method" value="EM"/>
    <property type="resolution" value="3.40 A"/>
    <property type="chains" value="L=13-216"/>
</dbReference>
<dbReference type="PDB" id="6TB3">
    <property type="method" value="EM"/>
    <property type="resolution" value="2.80 A"/>
    <property type="chains" value="BT=13-216"/>
</dbReference>
<dbReference type="PDB" id="6WOO">
    <property type="method" value="EM"/>
    <property type="resolution" value="2.90 A"/>
    <property type="chains" value="q=1-217"/>
</dbReference>
<dbReference type="PDB" id="6YLG">
    <property type="method" value="EM"/>
    <property type="resolution" value="3.00 A"/>
    <property type="chains" value="o=1-217"/>
</dbReference>
<dbReference type="PDB" id="6YLH">
    <property type="method" value="EM"/>
    <property type="resolution" value="3.10 A"/>
    <property type="chains" value="o=1-217"/>
</dbReference>
<dbReference type="PDB" id="7NAC">
    <property type="method" value="EM"/>
    <property type="resolution" value="3.04 A"/>
    <property type="chains" value="a=1-217"/>
</dbReference>
<dbReference type="PDB" id="7R7A">
    <property type="method" value="EM"/>
    <property type="resolution" value="3.04 A"/>
    <property type="chains" value="a=1-217"/>
</dbReference>
<dbReference type="PDB" id="7R7C">
    <property type="method" value="EM"/>
    <property type="resolution" value="3.71 A"/>
    <property type="chains" value="a=1-217"/>
</dbReference>
<dbReference type="PDB" id="7ZW0">
    <property type="method" value="EM"/>
    <property type="resolution" value="2.40 A"/>
    <property type="chains" value="LB=1-217"/>
</dbReference>
<dbReference type="PDB" id="8AAF">
    <property type="method" value="EM"/>
    <property type="resolution" value="2.50 A"/>
    <property type="chains" value="w=1-217"/>
</dbReference>
<dbReference type="PDB" id="8AGT">
    <property type="method" value="EM"/>
    <property type="resolution" value="2.60 A"/>
    <property type="chains" value="w=1-217"/>
</dbReference>
<dbReference type="PDB" id="8AGU">
    <property type="method" value="EM"/>
    <property type="resolution" value="2.70 A"/>
    <property type="chains" value="w=1-217"/>
</dbReference>
<dbReference type="PDB" id="8AGV">
    <property type="method" value="EM"/>
    <property type="resolution" value="2.60 A"/>
    <property type="chains" value="w=1-217"/>
</dbReference>
<dbReference type="PDB" id="8AGW">
    <property type="method" value="EM"/>
    <property type="resolution" value="2.60 A"/>
    <property type="chains" value="w=1-217"/>
</dbReference>
<dbReference type="PDB" id="8AGX">
    <property type="method" value="EM"/>
    <property type="resolution" value="2.40 A"/>
    <property type="chains" value="w=1-217"/>
</dbReference>
<dbReference type="PDB" id="8AGZ">
    <property type="method" value="EM"/>
    <property type="resolution" value="2.60 A"/>
    <property type="chains" value="w=1-217"/>
</dbReference>
<dbReference type="PDB" id="8BN3">
    <property type="method" value="EM"/>
    <property type="resolution" value="2.40 A"/>
    <property type="chains" value="B=1-217"/>
</dbReference>
<dbReference type="PDB" id="8BQD">
    <property type="method" value="EM"/>
    <property type="resolution" value="3.90 A"/>
    <property type="chains" value="BT=1-217"/>
</dbReference>
<dbReference type="PDB" id="8BQX">
    <property type="method" value="EM"/>
    <property type="resolution" value="3.80 A"/>
    <property type="chains" value="BT=1-217"/>
</dbReference>
<dbReference type="PDB" id="8HFR">
    <property type="method" value="EM"/>
    <property type="resolution" value="2.64 A"/>
    <property type="chains" value="As=1-217"/>
</dbReference>
<dbReference type="PDB" id="8K2D">
    <property type="method" value="EM"/>
    <property type="resolution" value="3.20 A"/>
    <property type="chains" value="L1=1-217"/>
</dbReference>
<dbReference type="PDB" id="8K82">
    <property type="method" value="EM"/>
    <property type="resolution" value="3.00 A"/>
    <property type="chains" value="L1=1-217"/>
</dbReference>
<dbReference type="PDB" id="8T2X">
    <property type="method" value="EM"/>
    <property type="resolution" value="2.46 A"/>
    <property type="chains" value="E=1-217"/>
</dbReference>
<dbReference type="PDB" id="8T3A">
    <property type="method" value="EM"/>
    <property type="resolution" value="2.86 A"/>
    <property type="chains" value="E=1-217"/>
</dbReference>
<dbReference type="PDB" id="8T3B">
    <property type="method" value="EM"/>
    <property type="resolution" value="3.08 A"/>
    <property type="chains" value="E=1-217"/>
</dbReference>
<dbReference type="PDB" id="8T3C">
    <property type="method" value="EM"/>
    <property type="resolution" value="3.86 A"/>
    <property type="chains" value="E=1-217"/>
</dbReference>
<dbReference type="PDB" id="8T3D">
    <property type="method" value="EM"/>
    <property type="resolution" value="2.95 A"/>
    <property type="chains" value="E=1-217"/>
</dbReference>
<dbReference type="PDB" id="8T3E">
    <property type="method" value="EM"/>
    <property type="resolution" value="3.04 A"/>
    <property type="chains" value="E=1-217"/>
</dbReference>
<dbReference type="PDB" id="8T3F">
    <property type="method" value="EM"/>
    <property type="resolution" value="3.09 A"/>
    <property type="chains" value="E=1-217"/>
</dbReference>
<dbReference type="PDB" id="8V83">
    <property type="method" value="EM"/>
    <property type="resolution" value="2.53 A"/>
    <property type="chains" value="a=1-217"/>
</dbReference>
<dbReference type="PDB" id="8V84">
    <property type="method" value="EM"/>
    <property type="resolution" value="2.70 A"/>
    <property type="chains" value="a=1-217"/>
</dbReference>
<dbReference type="PDB" id="8V87">
    <property type="method" value="EM"/>
    <property type="resolution" value="2.66 A"/>
    <property type="chains" value="a=1-217"/>
</dbReference>
<dbReference type="PDBsum" id="2NOQ"/>
<dbReference type="PDBsum" id="3J0P"/>
<dbReference type="PDBsum" id="3J0Q"/>
<dbReference type="PDBsum" id="3J6X"/>
<dbReference type="PDBsum" id="3J6Y"/>
<dbReference type="PDBsum" id="3J77"/>
<dbReference type="PDBsum" id="3J78"/>
<dbReference type="PDBsum" id="4V4B"/>
<dbReference type="PDBsum" id="4V5Z"/>
<dbReference type="PDBsum" id="4V6I"/>
<dbReference type="PDBsum" id="4V7F"/>
<dbReference type="PDBsum" id="4V7H"/>
<dbReference type="PDBsum" id="4V7R"/>
<dbReference type="PDBsum" id="4V91"/>
<dbReference type="PDBsum" id="5JCS"/>
<dbReference type="PDBsum" id="5JUO"/>
<dbReference type="PDBsum" id="5JUP"/>
<dbReference type="PDBsum" id="5JUS"/>
<dbReference type="PDBsum" id="5JUT"/>
<dbReference type="PDBsum" id="5JUU"/>
<dbReference type="PDBsum" id="6GQB"/>
<dbReference type="PDBsum" id="6GQV"/>
<dbReference type="PDBsum" id="6OIG"/>
<dbReference type="PDBsum" id="6R84"/>
<dbReference type="PDBsum" id="6R86"/>
<dbReference type="PDBsum" id="6R87"/>
<dbReference type="PDBsum" id="6TB3"/>
<dbReference type="PDBsum" id="6WOO"/>
<dbReference type="PDBsum" id="6YLG"/>
<dbReference type="PDBsum" id="6YLH"/>
<dbReference type="PDBsum" id="7NAC"/>
<dbReference type="PDBsum" id="7R7A"/>
<dbReference type="PDBsum" id="7R7C"/>
<dbReference type="PDBsum" id="7ZW0"/>
<dbReference type="PDBsum" id="8AAF"/>
<dbReference type="PDBsum" id="8AGT"/>
<dbReference type="PDBsum" id="8AGU"/>
<dbReference type="PDBsum" id="8AGV"/>
<dbReference type="PDBsum" id="8AGW"/>
<dbReference type="PDBsum" id="8AGX"/>
<dbReference type="PDBsum" id="8AGZ"/>
<dbReference type="PDBsum" id="8BN3"/>
<dbReference type="PDBsum" id="8BQD"/>
<dbReference type="PDBsum" id="8BQX"/>
<dbReference type="PDBsum" id="8HFR"/>
<dbReference type="PDBsum" id="8K2D"/>
<dbReference type="PDBsum" id="8K82"/>
<dbReference type="PDBsum" id="8T2X"/>
<dbReference type="PDBsum" id="8T3A"/>
<dbReference type="PDBsum" id="8T3B"/>
<dbReference type="PDBsum" id="8T3C"/>
<dbReference type="PDBsum" id="8T3D"/>
<dbReference type="PDBsum" id="8T3E"/>
<dbReference type="PDBsum" id="8T3F"/>
<dbReference type="PDBsum" id="8V83"/>
<dbReference type="PDBsum" id="8V84"/>
<dbReference type="PDBsum" id="8V87"/>
<dbReference type="EMDB" id="EMD-0048"/>
<dbReference type="EMDB" id="EMD-0049"/>
<dbReference type="EMDB" id="EMD-10431"/>
<dbReference type="EMDB" id="EMD-10838"/>
<dbReference type="EMDB" id="EMD-10839"/>
<dbReference type="EMDB" id="EMD-14990"/>
<dbReference type="EMDB" id="EMD-15296"/>
<dbReference type="EMDB" id="EMD-15423"/>
<dbReference type="EMDB" id="EMD-15424"/>
<dbReference type="EMDB" id="EMD-15425"/>
<dbReference type="EMDB" id="EMD-15426"/>
<dbReference type="EMDB" id="EMD-15427"/>
<dbReference type="EMDB" id="EMD-15428"/>
<dbReference type="EMDB" id="EMD-16127"/>
<dbReference type="EMDB" id="EMD-16182"/>
<dbReference type="EMDB" id="EMD-16191"/>
<dbReference type="EMDB" id="EMD-20077"/>
<dbReference type="EMDB" id="EMD-21859"/>
<dbReference type="EMDB" id="EMD-24297"/>
<dbReference type="EMDB" id="EMD-34725"/>
<dbReference type="EMDB" id="EMD-36839"/>
<dbReference type="EMDB" id="EMD-36945"/>
<dbReference type="EMDB" id="EMD-43017"/>
<dbReference type="EMDB" id="EMD-43021"/>
<dbReference type="EMDB" id="EMD-43027"/>
<dbReference type="EMDB" id="EMD-4751"/>
<dbReference type="EMDB" id="EMD-4752"/>
<dbReference type="EMDB" id="EMD-4753"/>
<dbReference type="SMR" id="P0CX43"/>
<dbReference type="BioGRID" id="33117">
    <property type="interactions" value="203"/>
</dbReference>
<dbReference type="BioGRID" id="35965">
    <property type="interactions" value="224"/>
</dbReference>
<dbReference type="ComplexPortal" id="CPX-1601">
    <property type="entry name" value="60S cytosolic large ribosomal subunit"/>
</dbReference>
<dbReference type="FunCoup" id="P0CX43">
    <property type="interactions" value="1281"/>
</dbReference>
<dbReference type="IntAct" id="P0CX43">
    <property type="interactions" value="20"/>
</dbReference>
<dbReference type="MINT" id="P0CX43"/>
<dbReference type="STRING" id="4932.YGL135W"/>
<dbReference type="iPTMnet" id="P0CX43"/>
<dbReference type="PaxDb" id="4932-YGL135W"/>
<dbReference type="PeptideAtlas" id="P0CX43"/>
<dbReference type="TopDownProteomics" id="P0CX43"/>
<dbReference type="EnsemblFungi" id="YGL135W_mRNA">
    <property type="protein sequence ID" value="YGL135W"/>
    <property type="gene ID" value="YGL135W"/>
</dbReference>
<dbReference type="EnsemblFungi" id="YPL220W_mRNA">
    <property type="protein sequence ID" value="YPL220W"/>
    <property type="gene ID" value="YPL220W"/>
</dbReference>
<dbReference type="GeneID" id="855881"/>
<dbReference type="KEGG" id="sce:YGL135W"/>
<dbReference type="KEGG" id="sce:YPL220W"/>
<dbReference type="AGR" id="SGD:S000006141"/>
<dbReference type="SGD" id="S000006141">
    <property type="gene designation" value="RPL1A"/>
</dbReference>
<dbReference type="VEuPathDB" id="FungiDB:YGL135W"/>
<dbReference type="VEuPathDB" id="FungiDB:YPL220W"/>
<dbReference type="eggNOG" id="KOG1570">
    <property type="taxonomic scope" value="Eukaryota"/>
</dbReference>
<dbReference type="HOGENOM" id="CLU_062853_3_0_1"/>
<dbReference type="InParanoid" id="P0CX43"/>
<dbReference type="OMA" id="GPRNKMP"/>
<dbReference type="OrthoDB" id="2449818at2759"/>
<dbReference type="BioCyc" id="YEAST:G3O-34109-MONOMER"/>
<dbReference type="Reactome" id="R-SCE-156827">
    <property type="pathway name" value="L13a-mediated translational silencing of Ceruloplasmin expression"/>
</dbReference>
<dbReference type="Reactome" id="R-SCE-1799339">
    <property type="pathway name" value="SRP-dependent cotranslational protein targeting to membrane"/>
</dbReference>
<dbReference type="Reactome" id="R-SCE-72689">
    <property type="pathway name" value="Formation of a pool of free 40S subunits"/>
</dbReference>
<dbReference type="Reactome" id="R-SCE-72706">
    <property type="pathway name" value="GTP hydrolysis and joining of the 60S ribosomal subunit"/>
</dbReference>
<dbReference type="Reactome" id="R-SCE-975956">
    <property type="pathway name" value="Nonsense Mediated Decay (NMD) independent of the Exon Junction Complex (EJC)"/>
</dbReference>
<dbReference type="Reactome" id="R-SCE-975957">
    <property type="pathway name" value="Nonsense Mediated Decay (NMD) enhanced by the Exon Junction Complex (EJC)"/>
</dbReference>
<dbReference type="ChiTaRS" id="RPL1A">
    <property type="organism name" value="yeast"/>
</dbReference>
<dbReference type="EvolutionaryTrace" id="P0CX43"/>
<dbReference type="PRO" id="PR:P0CX43"/>
<dbReference type="Proteomes" id="UP000002311">
    <property type="component" value="Chromosome XVI"/>
</dbReference>
<dbReference type="RNAct" id="P0CX43">
    <property type="molecule type" value="protein"/>
</dbReference>
<dbReference type="ExpressionAtlas" id="P0CX43">
    <property type="expression patterns" value="baseline and differential"/>
</dbReference>
<dbReference type="GO" id="GO:0005829">
    <property type="term" value="C:cytosol"/>
    <property type="evidence" value="ECO:0000304"/>
    <property type="project" value="Reactome"/>
</dbReference>
<dbReference type="GO" id="GO:0022625">
    <property type="term" value="C:cytosolic large ribosomal subunit"/>
    <property type="evidence" value="ECO:0000314"/>
    <property type="project" value="SGD"/>
</dbReference>
<dbReference type="GO" id="GO:0003723">
    <property type="term" value="F:RNA binding"/>
    <property type="evidence" value="ECO:0000318"/>
    <property type="project" value="GO_Central"/>
</dbReference>
<dbReference type="GO" id="GO:0003735">
    <property type="term" value="F:structural constituent of ribosome"/>
    <property type="evidence" value="ECO:0000305"/>
    <property type="project" value="SGD"/>
</dbReference>
<dbReference type="GO" id="GO:0002181">
    <property type="term" value="P:cytoplasmic translation"/>
    <property type="evidence" value="ECO:0000305"/>
    <property type="project" value="SGD"/>
</dbReference>
<dbReference type="GO" id="GO:0000055">
    <property type="term" value="P:ribosomal large subunit export from nucleus"/>
    <property type="evidence" value="ECO:0000315"/>
    <property type="project" value="SGD"/>
</dbReference>
<dbReference type="CDD" id="cd00403">
    <property type="entry name" value="Ribosomal_L1"/>
    <property type="match status" value="1"/>
</dbReference>
<dbReference type="FunFam" id="3.30.190.20:FF:000006">
    <property type="entry name" value="Ribosomal protein"/>
    <property type="match status" value="1"/>
</dbReference>
<dbReference type="FunFam" id="3.40.50.790:FF:000002">
    <property type="entry name" value="Ribosomal protein"/>
    <property type="match status" value="1"/>
</dbReference>
<dbReference type="FunFam" id="3.30.190.20:FF:000009">
    <property type="entry name" value="Ribosomal protein L10a"/>
    <property type="match status" value="1"/>
</dbReference>
<dbReference type="Gene3D" id="3.30.190.20">
    <property type="match status" value="1"/>
</dbReference>
<dbReference type="Gene3D" id="3.40.50.790">
    <property type="match status" value="1"/>
</dbReference>
<dbReference type="InterPro" id="IPR050257">
    <property type="entry name" value="eL8/uL1-like"/>
</dbReference>
<dbReference type="InterPro" id="IPR002143">
    <property type="entry name" value="Ribosomal_uL1"/>
</dbReference>
<dbReference type="InterPro" id="IPR023674">
    <property type="entry name" value="Ribosomal_uL1-like"/>
</dbReference>
<dbReference type="InterPro" id="IPR028364">
    <property type="entry name" value="Ribosomal_uL1/biogenesis"/>
</dbReference>
<dbReference type="InterPro" id="IPR016095">
    <property type="entry name" value="Ribosomal_uL1_3-a/b-sand"/>
</dbReference>
<dbReference type="InterPro" id="IPR023673">
    <property type="entry name" value="Ribosomal_uL1_CS"/>
</dbReference>
<dbReference type="PANTHER" id="PTHR23105">
    <property type="entry name" value="RIBOSOMAL PROTEIN L7AE FAMILY MEMBER"/>
    <property type="match status" value="1"/>
</dbReference>
<dbReference type="Pfam" id="PF00687">
    <property type="entry name" value="Ribosomal_L1"/>
    <property type="match status" value="1"/>
</dbReference>
<dbReference type="PIRSF" id="PIRSF002155">
    <property type="entry name" value="Ribosomal_L1"/>
    <property type="match status" value="1"/>
</dbReference>
<dbReference type="SUPFAM" id="SSF56808">
    <property type="entry name" value="Ribosomal protein L1"/>
    <property type="match status" value="1"/>
</dbReference>
<dbReference type="PROSITE" id="PS01199">
    <property type="entry name" value="RIBOSOMAL_L1"/>
    <property type="match status" value="1"/>
</dbReference>
<reference key="1">
    <citation type="journal article" date="1995" name="Mol. Cell. Biol.">
        <title>The duplicated Saccharomyces cerevisiae gene SSM1 encodes a eucaryotic homolog of the eubacterial and archaebacterial L1 ribosomal proteins.</title>
        <authorList>
            <person name="Petitjean A."/>
            <person name="Bonneaud N."/>
            <person name="Lacroute F."/>
        </authorList>
    </citation>
    <scope>NUCLEOTIDE SEQUENCE [GENOMIC DNA]</scope>
    <source>
        <strain>ATCC 28383 / FL100 / VTT C-80102</strain>
    </source>
</reference>
<reference key="2">
    <citation type="journal article" date="1997" name="Nature">
        <title>The nucleotide sequence of Saccharomyces cerevisiae chromosome XVI.</title>
        <authorList>
            <person name="Bussey H."/>
            <person name="Storms R.K."/>
            <person name="Ahmed A."/>
            <person name="Albermann K."/>
            <person name="Allen E."/>
            <person name="Ansorge W."/>
            <person name="Araujo R."/>
            <person name="Aparicio A."/>
            <person name="Barrell B.G."/>
            <person name="Badcock K."/>
            <person name="Benes V."/>
            <person name="Botstein D."/>
            <person name="Bowman S."/>
            <person name="Brueckner M."/>
            <person name="Carpenter J."/>
            <person name="Cherry J.M."/>
            <person name="Chung E."/>
            <person name="Churcher C.M."/>
            <person name="Coster F."/>
            <person name="Davis K."/>
            <person name="Davis R.W."/>
            <person name="Dietrich F.S."/>
            <person name="Delius H."/>
            <person name="DiPaolo T."/>
            <person name="Dubois E."/>
            <person name="Duesterhoeft A."/>
            <person name="Duncan M."/>
            <person name="Floeth M."/>
            <person name="Fortin N."/>
            <person name="Friesen J.D."/>
            <person name="Fritz C."/>
            <person name="Goffeau A."/>
            <person name="Hall J."/>
            <person name="Hebling U."/>
            <person name="Heumann K."/>
            <person name="Hilbert H."/>
            <person name="Hillier L.W."/>
            <person name="Hunicke-Smith S."/>
            <person name="Hyman R.W."/>
            <person name="Johnston M."/>
            <person name="Kalman S."/>
            <person name="Kleine K."/>
            <person name="Komp C."/>
            <person name="Kurdi O."/>
            <person name="Lashkari D."/>
            <person name="Lew H."/>
            <person name="Lin A."/>
            <person name="Lin D."/>
            <person name="Louis E.J."/>
            <person name="Marathe R."/>
            <person name="Messenguy F."/>
            <person name="Mewes H.-W."/>
            <person name="Mirtipati S."/>
            <person name="Moestl D."/>
            <person name="Mueller-Auer S."/>
            <person name="Namath A."/>
            <person name="Nentwich U."/>
            <person name="Oefner P."/>
            <person name="Pearson D."/>
            <person name="Petel F.X."/>
            <person name="Pohl T.M."/>
            <person name="Purnelle B."/>
            <person name="Rajandream M.A."/>
            <person name="Rechmann S."/>
            <person name="Rieger M."/>
            <person name="Riles L."/>
            <person name="Roberts D."/>
            <person name="Schaefer M."/>
            <person name="Scharfe M."/>
            <person name="Scherens B."/>
            <person name="Schramm S."/>
            <person name="Schroeder M."/>
            <person name="Sdicu A.-M."/>
            <person name="Tettelin H."/>
            <person name="Urrestarazu L.A."/>
            <person name="Ushinsky S."/>
            <person name="Vierendeels F."/>
            <person name="Vissers S."/>
            <person name="Voss H."/>
            <person name="Walsh S.V."/>
            <person name="Wambutt R."/>
            <person name="Wang Y."/>
            <person name="Wedler E."/>
            <person name="Wedler H."/>
            <person name="Winnett E."/>
            <person name="Zhong W.-W."/>
            <person name="Zollner A."/>
            <person name="Vo D.H."/>
            <person name="Hani J."/>
        </authorList>
    </citation>
    <scope>NUCLEOTIDE SEQUENCE [LARGE SCALE GENOMIC DNA]</scope>
    <source>
        <strain>ATCC 204508 / S288c</strain>
    </source>
</reference>
<reference key="3">
    <citation type="journal article" date="2014" name="G3 (Bethesda)">
        <title>The reference genome sequence of Saccharomyces cerevisiae: Then and now.</title>
        <authorList>
            <person name="Engel S.R."/>
            <person name="Dietrich F.S."/>
            <person name="Fisk D.G."/>
            <person name="Binkley G."/>
            <person name="Balakrishnan R."/>
            <person name="Costanzo M.C."/>
            <person name="Dwight S.S."/>
            <person name="Hitz B.C."/>
            <person name="Karra K."/>
            <person name="Nash R.S."/>
            <person name="Weng S."/>
            <person name="Wong E.D."/>
            <person name="Lloyd P."/>
            <person name="Skrzypek M.S."/>
            <person name="Miyasato S.R."/>
            <person name="Simison M."/>
            <person name="Cherry J.M."/>
        </authorList>
    </citation>
    <scope>GENOME REANNOTATION</scope>
    <source>
        <strain>ATCC 204508 / S288c</strain>
    </source>
</reference>
<reference key="4">
    <citation type="journal article" date="1998" name="Yeast">
        <title>The list of cytoplasmic ribosomal proteins of Saccharomyces cerevisiae.</title>
        <authorList>
            <person name="Planta R.J."/>
            <person name="Mager W.H."/>
        </authorList>
    </citation>
    <scope>NOMENCLATURE</scope>
    <scope>SUBUNIT</scope>
</reference>
<reference key="5">
    <citation type="journal article" date="1999" name="J. Biol. Chem.">
        <title>The action of N-terminal acetyltransferases on yeast ribosomal proteins.</title>
        <authorList>
            <person name="Arnold R.J."/>
            <person name="Polevoda B."/>
            <person name="Reilly J.P."/>
            <person name="Sherman F."/>
        </authorList>
    </citation>
    <scope>CLEAVAGE OF INITIATOR METHIONINE</scope>
    <scope>ACETYLATION AT SER-2 BY NATA</scope>
</reference>
<reference key="6">
    <citation type="journal article" date="2002" name="Proc. Natl. Acad. Sci. U.S.A.">
        <title>Direct mass spectrometric analysis of intact proteins of the yeast large ribosomal subunit using capillary LC/FTICR.</title>
        <authorList>
            <person name="Lee S.-W."/>
            <person name="Berger S.J."/>
            <person name="Martinovic S."/>
            <person name="Pasa-Tolic L."/>
            <person name="Anderson G.A."/>
            <person name="Shen Y."/>
            <person name="Zhao R."/>
            <person name="Smith R.D."/>
        </authorList>
    </citation>
    <scope>MASS SPECTROMETRY</scope>
</reference>
<reference key="7">
    <citation type="journal article" date="2003" name="Nature">
        <title>Global analysis of protein localization in budding yeast.</title>
        <authorList>
            <person name="Huh W.-K."/>
            <person name="Falvo J.V."/>
            <person name="Gerke L.C."/>
            <person name="Carroll A.S."/>
            <person name="Howson R.W."/>
            <person name="Weissman J.S."/>
            <person name="O'Shea E.K."/>
        </authorList>
    </citation>
    <scope>SUBCELLULAR LOCATION [LARGE SCALE ANALYSIS]</scope>
</reference>
<reference key="8">
    <citation type="journal article" date="2003" name="Nature">
        <title>Global analysis of protein expression in yeast.</title>
        <authorList>
            <person name="Ghaemmaghami S."/>
            <person name="Huh W.-K."/>
            <person name="Bower K."/>
            <person name="Howson R.W."/>
            <person name="Belle A."/>
            <person name="Dephoure N."/>
            <person name="O'Shea E.K."/>
            <person name="Weissman J.S."/>
        </authorList>
    </citation>
    <scope>LEVEL OF PROTEIN EXPRESSION [LARGE SCALE ANALYSIS]</scope>
</reference>
<reference key="9">
    <citation type="journal article" date="2007" name="J. Proteome Res.">
        <title>Large-scale phosphorylation analysis of alpha-factor-arrested Saccharomyces cerevisiae.</title>
        <authorList>
            <person name="Li X."/>
            <person name="Gerber S.A."/>
            <person name="Rudner A.D."/>
            <person name="Beausoleil S.A."/>
            <person name="Haas W."/>
            <person name="Villen J."/>
            <person name="Elias J.E."/>
            <person name="Gygi S.P."/>
        </authorList>
    </citation>
    <scope>PHOSPHORYLATION [LARGE SCALE ANALYSIS] AT SER-79</scope>
    <scope>IDENTIFICATION BY MASS SPECTROMETRY [LARGE SCALE ANALYSIS]</scope>
    <source>
        <strain>ADR376</strain>
    </source>
</reference>
<reference key="10">
    <citation type="journal article" date="2007" name="Proc. Natl. Acad. Sci. U.S.A.">
        <title>Analysis of phosphorylation sites on proteins from Saccharomyces cerevisiae by electron transfer dissociation (ETD) mass spectrometry.</title>
        <authorList>
            <person name="Chi A."/>
            <person name="Huttenhower C."/>
            <person name="Geer L.Y."/>
            <person name="Coon J.J."/>
            <person name="Syka J.E.P."/>
            <person name="Bai D.L."/>
            <person name="Shabanowitz J."/>
            <person name="Burke D.J."/>
            <person name="Troyanskaya O.G."/>
            <person name="Hunt D.F."/>
        </authorList>
    </citation>
    <scope>IDENTIFICATION BY MASS SPECTROMETRY [LARGE SCALE ANALYSIS]</scope>
</reference>
<reference key="11">
    <citation type="journal article" date="2009" name="Science">
        <title>Global analysis of Cdk1 substrate phosphorylation sites provides insights into evolution.</title>
        <authorList>
            <person name="Holt L.J."/>
            <person name="Tuch B.B."/>
            <person name="Villen J."/>
            <person name="Johnson A.D."/>
            <person name="Gygi S.P."/>
            <person name="Morgan D.O."/>
        </authorList>
    </citation>
    <scope>PHOSPHORYLATION [LARGE SCALE ANALYSIS] AT SER-79 AND SER-86</scope>
    <scope>IDENTIFICATION BY MASS SPECTROMETRY [LARGE SCALE ANALYSIS]</scope>
</reference>
<reference key="12">
    <citation type="journal article" date="2011" name="J. Biol. Chem.">
        <title>The ribosomal L1 protuberance in yeast is methylated on a lysine residue catalyzed by a seven beta-strand methyltransferase.</title>
        <authorList>
            <person name="Webb K.J."/>
            <person name="Al-Hadid Q."/>
            <person name="Zurita-Lopez C.I."/>
            <person name="Young B.D."/>
            <person name="Lipson R.S."/>
            <person name="Clarke S.G."/>
        </authorList>
    </citation>
    <scope>METHYLATION AT LYS-47</scope>
    <scope>IDENTIFICATION BY MASS SPECTROMETRY</scope>
</reference>
<reference key="13">
    <citation type="journal article" date="2011" name="Science">
        <title>The structure of the eukaryotic ribosome at 3.0 A resolution.</title>
        <authorList>
            <person name="Ben-Shem A."/>
            <person name="Garreau de Loubresse N."/>
            <person name="Melnikov S."/>
            <person name="Jenner L."/>
            <person name="Yusupova G."/>
            <person name="Yusupov M."/>
        </authorList>
    </citation>
    <scope>SUBUNIT</scope>
    <scope>SUBCELLULAR LOCATION</scope>
</reference>
<reference key="14">
    <citation type="journal article" date="2012" name="Proc. Natl. Acad. Sci. U.S.A.">
        <title>N-terminal acetylome analyses and functional insights of the N-terminal acetyltransferase NatB.</title>
        <authorList>
            <person name="Van Damme P."/>
            <person name="Lasa M."/>
            <person name="Polevoda B."/>
            <person name="Gazquez C."/>
            <person name="Elosegui-Artola A."/>
            <person name="Kim D.S."/>
            <person name="De Juan-Pardo E."/>
            <person name="Demeyer K."/>
            <person name="Hole K."/>
            <person name="Larrea E."/>
            <person name="Timmerman E."/>
            <person name="Prieto J."/>
            <person name="Arnesen T."/>
            <person name="Sherman F."/>
            <person name="Gevaert K."/>
            <person name="Aldabe R."/>
        </authorList>
    </citation>
    <scope>ACETYLATION [LARGE SCALE ANALYSIS] AT SER-2</scope>
    <scope>CLEAVAGE OF INITIATOR METHIONINE [LARGE SCALE ANALYSIS]</scope>
    <scope>IDENTIFICATION BY MASS SPECTROMETRY [LARGE SCALE ANALYSIS]</scope>
</reference>
<reference key="15">
    <citation type="journal article" date="2014" name="Curr. Opin. Struct. Biol.">
        <title>A new system for naming ribosomal proteins.</title>
        <authorList>
            <person name="Ban N."/>
            <person name="Beckmann R."/>
            <person name="Cate J.H.D."/>
            <person name="Dinman J.D."/>
            <person name="Dragon F."/>
            <person name="Ellis S.R."/>
            <person name="Lafontaine D.L.J."/>
            <person name="Lindahl L."/>
            <person name="Liljas A."/>
            <person name="Lipton J.M."/>
            <person name="McAlear M.A."/>
            <person name="Moore P.B."/>
            <person name="Noller H.F."/>
            <person name="Ortega J."/>
            <person name="Panse V.G."/>
            <person name="Ramakrishnan V."/>
            <person name="Spahn C.M.T."/>
            <person name="Steitz T.A."/>
            <person name="Tchorzewski M."/>
            <person name="Tollervey D."/>
            <person name="Warren A.J."/>
            <person name="Williamson J.R."/>
            <person name="Wilson D."/>
            <person name="Yonath A."/>
            <person name="Yusupov M."/>
        </authorList>
    </citation>
    <scope>NOMENCLATURE</scope>
</reference>
<reference key="16">
    <citation type="journal article" date="2001" name="Cell">
        <title>Structure of the 80S ribosome from Saccharomyces cerevisiae -- tRNA-ribosome and subunit-subunit interactions.</title>
        <authorList>
            <person name="Spahn C.M.T."/>
            <person name="Beckmann R."/>
            <person name="Eswar N."/>
            <person name="Penczek P.A."/>
            <person name="Sali A."/>
            <person name="Blobel G."/>
            <person name="Frank J."/>
        </authorList>
    </citation>
    <scope>3D-STRUCTURE MODELING OF 4-216</scope>
    <scope>ELECTRON MICROSCOPY</scope>
</reference>
<reference key="17">
    <citation type="journal article" date="2004" name="EMBO J.">
        <title>Domain movements of elongation factor eEF2 and the eukaryotic 80S ribosome facilitate tRNA translocation.</title>
        <authorList>
            <person name="Spahn C.M.T."/>
            <person name="Gomez-Lorenzo M.G."/>
            <person name="Grassucci R.A."/>
            <person name="Joergensen R."/>
            <person name="Andersen G.R."/>
            <person name="Beckmann R."/>
            <person name="Penczek P.A."/>
            <person name="Ballesta J.P.G."/>
            <person name="Frank J."/>
        </authorList>
    </citation>
    <scope>3D-STRUCTURE MODELING</scope>
    <scope>ELECTRON MICROSCOPY</scope>
</reference>
<reference key="18">
    <citation type="journal article" date="2006" name="Nat. Struct. Mol. Biol.">
        <title>Structure of the ribosome-bound cricket paralysis virus IRES RNA.</title>
        <authorList>
            <person name="Schueler M."/>
            <person name="Connell S.R."/>
            <person name="Lescoute A."/>
            <person name="Giesebrecht J."/>
            <person name="Dabrowski M."/>
            <person name="Schroeer B."/>
            <person name="Mielke T."/>
            <person name="Penczek P.A."/>
            <person name="Westhof E."/>
            <person name="Spahn C.M.T."/>
        </authorList>
    </citation>
    <scope>STRUCTURE BY ELECTRON MICROSCOPY (7.3 ANGSTROMS) OF 4-216</scope>
</reference>
<reference key="19">
    <citation type="journal article" date="2010" name="Science">
        <title>Crystal structure of the eukaryotic ribosome.</title>
        <authorList>
            <person name="Ben-Shem A."/>
            <person name="Jenner L."/>
            <person name="Yusupova G."/>
            <person name="Yusupov M."/>
        </authorList>
    </citation>
    <scope>X-RAY CRYSTALLOGRAPHY (4.00 ANGSTROMS) OF 80S RIBOSOME</scope>
</reference>
<name>RL1A_YEAST</name>
<proteinExistence type="evidence at protein level"/>
<feature type="initiator methionine" description="Removed" evidence="1 14">
    <location>
        <position position="1"/>
    </location>
</feature>
<feature type="chain" id="PRO_0000125842" description="Large ribosomal subunit protein uL1A">
    <location>
        <begin position="2"/>
        <end position="217"/>
    </location>
</feature>
<feature type="modified residue" description="N-acetylserine" evidence="1 14">
    <location>
        <position position="2"/>
    </location>
</feature>
<feature type="modified residue" description="N6-methyllysine; by RKM5" evidence="5">
    <location>
        <position position="47"/>
    </location>
</feature>
<feature type="modified residue" description="Phosphoserine" evidence="12 13">
    <location>
        <position position="79"/>
    </location>
</feature>
<feature type="modified residue" description="Phosphoserine" evidence="13">
    <location>
        <position position="86"/>
    </location>
</feature>
<protein>
    <recommendedName>
        <fullName evidence="7">Large ribosomal subunit protein uL1A</fullName>
    </recommendedName>
    <alternativeName>
        <fullName evidence="8">60S ribosomal protein L1-A</fullName>
    </alternativeName>
    <alternativeName>
        <fullName>L10a</fullName>
    </alternativeName>
</protein>
<comment type="function">
    <text evidence="10">Component of the ribosome, a large ribonucleoprotein complex responsible for the synthesis of proteins in the cell. The small ribosomal subunit (SSU) binds messenger RNAs (mRNAs) and translates the encoded message by selecting cognate aminoacyl-transfer RNA (tRNA) molecules. The large subunit (LSU) contains the ribosomal catalytic site termed the peptidyl transferase center (PTC), which catalyzes the formation of peptide bonds, thereby polymerizing the amino acids delivered by tRNAs into a polypeptide chain. The nascent polypeptides leave the ribosome through a tunnel in the LSU and interact with protein factors that function in enzymatic processing, targeting, and the membrane insertion of nascent chains at the exit of the ribosomal tunnel. uL1 forms part of the L1 stalk, a mobile element that plays a role in evacuating the exit-site tRNA.</text>
</comment>
<comment type="subunit">
    <text evidence="6 11">Component of the large ribosomal subunit (LSU). Mature yeast ribosomes consist of a small (40S) and a large (60S) subunit. The 40S small subunit contains 1 molecule of ribosomal RNA (18S rRNA) and 33 different proteins (encoded by 57 genes). The large 60S subunit contains 3 rRNA molecules (25S, 5.8S and 5S rRNA) and 46 different proteins (encoded by 81 genes). uL1 forms part of the L1 stalk (PubMed:22096102, PubMed:9559554).</text>
</comment>
<comment type="subcellular location">
    <subcellularLocation>
        <location evidence="3 6">Cytoplasm</location>
    </subcellularLocation>
</comment>
<comment type="PTM">
    <text evidence="1">N-terminally acetylated by acetyltransferase NatA.</text>
</comment>
<comment type="mass spectrometry">
    <text>Average mass with 1 acetylation and 1 methylation modification.</text>
</comment>
<comment type="miscellaneous">
    <text evidence="4">Present with 116000 molecules/cell in log phase SD medium.</text>
</comment>
<comment type="miscellaneous">
    <text evidence="9">There are 2 genes for uL1 in yeast.</text>
</comment>
<comment type="similarity">
    <text evidence="9">Belongs to the universal ribosomal protein uL1 family.</text>
</comment>
<sequence>MSKITSSQVREHVKELLKYSNETKKRNFLETVELQVGLKNYDPQRDKRFSGSLKLPNCPRPNMSICIFGDAFDVDRAKSCGVDAMSVDDLKKLNKNKKLIKKLSKKYNAFIASEVLIKQVPRLLGPQLSKAGKFPTPVSHNDDLYGKVTDVRSTIKFQLKKVLCLAVAVGNVEMEEDVLVNQILMSVNFFVSLLKKNWQNVGSLVVKSSMGPAFRLY</sequence>
<keyword id="KW-0002">3D-structure</keyword>
<keyword id="KW-0007">Acetylation</keyword>
<keyword id="KW-0963">Cytoplasm</keyword>
<keyword id="KW-0488">Methylation</keyword>
<keyword id="KW-0597">Phosphoprotein</keyword>
<keyword id="KW-1185">Reference proteome</keyword>
<keyword id="KW-0687">Ribonucleoprotein</keyword>
<keyword id="KW-0689">Ribosomal protein</keyword>
<organism>
    <name type="scientific">Saccharomyces cerevisiae (strain ATCC 204508 / S288c)</name>
    <name type="common">Baker's yeast</name>
    <dbReference type="NCBI Taxonomy" id="559292"/>
    <lineage>
        <taxon>Eukaryota</taxon>
        <taxon>Fungi</taxon>
        <taxon>Dikarya</taxon>
        <taxon>Ascomycota</taxon>
        <taxon>Saccharomycotina</taxon>
        <taxon>Saccharomycetes</taxon>
        <taxon>Saccharomycetales</taxon>
        <taxon>Saccharomycetaceae</taxon>
        <taxon>Saccharomyces</taxon>
    </lineage>
</organism>